<sequence length="688" mass="74430">MFKKLFGQLQRIGKALMLPVAILPAAGILLAFGNAMHNEQLVEIAPWLKNDIIVMISSVMEAAGQVVFDNLPLLFAVGTALGLAGGDGVAALAALVGYLIMNATMGKVLHITIDDIFSYAKGAKELSQAAKEPAHALVLGIPTLQTGVFGGIIMGALAAWCYNKFYNITLPPFLGFFAGKRFVPIVTSVVAIATGVLLSFAWPPIQDGLNSLSNFLLNKNLTLTTFIFGIIERSLIPFGLHHIFYSPFWFEFGSYTNHAGELVRGDQRIWMAQLKDGVPFTAGAFTTGKYPFMMFGLPAAAFAIYKNARPERKKVVGGLMLSAGLTAFLTGITEPLEFSFLFVAPVLYGIHVLLAGTSFLVMHLLGVKIGMTFSGGFIDYILYGLLNWDRSHALLVIPVGIVYAIVYYFLFDFAIRKFKLKTPGREDEETEIRNSSVAKLPFDVLDAMGGKENIKHLDACITRLRVEVVDKSKVDVAGIKALGASGVLEVGNNMQAIFGPKSDQIKHDMAKIMSGEITKPSETTVTEEMSDEPVHVEALGTTDIYAPGVGQIIPLSEVPDQVFAGKMMGDGIGFIPEKGEIVAPFDGTVKTIFPTKHAIGLESESGVEVLIHIGIDTVKLNGEGFESLINVDEKVTQAQPLMKVNLAYLKAHAPSIVTPMIITNLENKELVIEDVQDADPGKLIMTVK</sequence>
<name>PTU3C_STAA1</name>
<gene>
    <name type="primary">glcB</name>
    <name type="ordered locus">SAHV_2522</name>
</gene>
<organism>
    <name type="scientific">Staphylococcus aureus (strain Mu3 / ATCC 700698)</name>
    <dbReference type="NCBI Taxonomy" id="418127"/>
    <lineage>
        <taxon>Bacteria</taxon>
        <taxon>Bacillati</taxon>
        <taxon>Bacillota</taxon>
        <taxon>Bacilli</taxon>
        <taxon>Bacillales</taxon>
        <taxon>Staphylococcaceae</taxon>
        <taxon>Staphylococcus</taxon>
    </lineage>
</organism>
<protein>
    <recommendedName>
        <fullName>PTS system glucoside-specific EIICBA component</fullName>
    </recommendedName>
    <domain>
        <recommendedName>
            <fullName>Glucoside permease IIC component</fullName>
        </recommendedName>
        <alternativeName>
            <fullName>PTS system glucoside-specific EIIC component</fullName>
        </alternativeName>
    </domain>
    <domain>
        <recommendedName>
            <fullName>Glucoside-specific phosphotransferase enzyme IIB component</fullName>
            <ecNumber>2.7.1.-</ecNumber>
        </recommendedName>
        <alternativeName>
            <fullName>PTS system glucoside-specific EIIB component</fullName>
        </alternativeName>
    </domain>
    <domain>
        <recommendedName>
            <fullName>Glucoside-specific phosphotransferase enzyme IIA component</fullName>
        </recommendedName>
        <alternativeName>
            <fullName>PTS system glucoside-specific EIIA component</fullName>
        </alternativeName>
    </domain>
</protein>
<proteinExistence type="inferred from homology"/>
<evidence type="ECO:0000250" key="1"/>
<evidence type="ECO:0000255" key="2">
    <source>
        <dbReference type="PROSITE-ProRule" id="PRU00416"/>
    </source>
</evidence>
<evidence type="ECO:0000255" key="3">
    <source>
        <dbReference type="PROSITE-ProRule" id="PRU00421"/>
    </source>
</evidence>
<evidence type="ECO:0000255" key="4">
    <source>
        <dbReference type="PROSITE-ProRule" id="PRU00426"/>
    </source>
</evidence>
<reference key="1">
    <citation type="journal article" date="2008" name="Antimicrob. Agents Chemother.">
        <title>Mutated response regulator graR is responsible for phenotypic conversion of Staphylococcus aureus from heterogeneous vancomycin-intermediate resistance to vancomycin-intermediate resistance.</title>
        <authorList>
            <person name="Neoh H.-M."/>
            <person name="Cui L."/>
            <person name="Yuzawa H."/>
            <person name="Takeuchi F."/>
            <person name="Matsuo M."/>
            <person name="Hiramatsu K."/>
        </authorList>
    </citation>
    <scope>NUCLEOTIDE SEQUENCE [LARGE SCALE GENOMIC DNA]</scope>
    <source>
        <strain>Mu3 / ATCC 700698</strain>
    </source>
</reference>
<dbReference type="EC" id="2.7.1.-"/>
<dbReference type="EMBL" id="AP009324">
    <property type="protein sequence ID" value="BAF79405.1"/>
    <property type="molecule type" value="Genomic_DNA"/>
</dbReference>
<dbReference type="SMR" id="A7X6P1"/>
<dbReference type="KEGG" id="saw:SAHV_2522"/>
<dbReference type="HOGENOM" id="CLU_012312_1_1_9"/>
<dbReference type="GO" id="GO:0005886">
    <property type="term" value="C:plasma membrane"/>
    <property type="evidence" value="ECO:0007669"/>
    <property type="project" value="UniProtKB-SubCell"/>
</dbReference>
<dbReference type="GO" id="GO:0055056">
    <property type="term" value="F:D-glucose transmembrane transporter activity"/>
    <property type="evidence" value="ECO:0007669"/>
    <property type="project" value="InterPro"/>
</dbReference>
<dbReference type="GO" id="GO:0016301">
    <property type="term" value="F:kinase activity"/>
    <property type="evidence" value="ECO:0007669"/>
    <property type="project" value="UniProtKB-KW"/>
</dbReference>
<dbReference type="GO" id="GO:0008982">
    <property type="term" value="F:protein-N(PI)-phosphohistidine-sugar phosphotransferase activity"/>
    <property type="evidence" value="ECO:0007669"/>
    <property type="project" value="InterPro"/>
</dbReference>
<dbReference type="GO" id="GO:0090563">
    <property type="term" value="F:protein-phosphocysteine-sugar phosphotransferase activity"/>
    <property type="evidence" value="ECO:0007669"/>
    <property type="project" value="TreeGrafter"/>
</dbReference>
<dbReference type="GO" id="GO:1904659">
    <property type="term" value="P:D-glucose transmembrane transport"/>
    <property type="evidence" value="ECO:0007669"/>
    <property type="project" value="InterPro"/>
</dbReference>
<dbReference type="GO" id="GO:0009401">
    <property type="term" value="P:phosphoenolpyruvate-dependent sugar phosphotransferase system"/>
    <property type="evidence" value="ECO:0007669"/>
    <property type="project" value="UniProtKB-KW"/>
</dbReference>
<dbReference type="CDD" id="cd00212">
    <property type="entry name" value="PTS_IIB_glc"/>
    <property type="match status" value="1"/>
</dbReference>
<dbReference type="FunFam" id="2.70.70.10:FF:000001">
    <property type="entry name" value="PTS system glucose-specific IIA component"/>
    <property type="match status" value="1"/>
</dbReference>
<dbReference type="FunFam" id="3.30.1360.60:FF:000001">
    <property type="entry name" value="PTS system glucose-specific IIBC component PtsG"/>
    <property type="match status" value="1"/>
</dbReference>
<dbReference type="Gene3D" id="2.70.70.10">
    <property type="entry name" value="Glucose Permease (Domain IIA)"/>
    <property type="match status" value="1"/>
</dbReference>
<dbReference type="Gene3D" id="3.30.1360.60">
    <property type="entry name" value="Glucose permease domain IIB"/>
    <property type="match status" value="1"/>
</dbReference>
<dbReference type="InterPro" id="IPR011055">
    <property type="entry name" value="Dup_hybrid_motif"/>
</dbReference>
<dbReference type="InterPro" id="IPR036878">
    <property type="entry name" value="Glu_permease_IIB"/>
</dbReference>
<dbReference type="InterPro" id="IPR018113">
    <property type="entry name" value="PTrfase_EIIB_Cys"/>
</dbReference>
<dbReference type="InterPro" id="IPR001127">
    <property type="entry name" value="PTS_EIIA_1_perm"/>
</dbReference>
<dbReference type="InterPro" id="IPR003352">
    <property type="entry name" value="PTS_EIIC"/>
</dbReference>
<dbReference type="InterPro" id="IPR013013">
    <property type="entry name" value="PTS_EIIC_1"/>
</dbReference>
<dbReference type="InterPro" id="IPR050429">
    <property type="entry name" value="PTS_Glucose_EIICBA"/>
</dbReference>
<dbReference type="InterPro" id="IPR001996">
    <property type="entry name" value="PTS_IIB_1"/>
</dbReference>
<dbReference type="InterPro" id="IPR011299">
    <property type="entry name" value="PTS_IIBC_glc"/>
</dbReference>
<dbReference type="NCBIfam" id="TIGR00826">
    <property type="entry name" value="EIIB_glc"/>
    <property type="match status" value="1"/>
</dbReference>
<dbReference type="NCBIfam" id="TIGR00830">
    <property type="entry name" value="PTBA"/>
    <property type="match status" value="1"/>
</dbReference>
<dbReference type="NCBIfam" id="TIGR02002">
    <property type="entry name" value="PTS-II-BC-glcB"/>
    <property type="match status" value="1"/>
</dbReference>
<dbReference type="PANTHER" id="PTHR30009">
    <property type="entry name" value="CYTOCHROME C-TYPE SYNTHESIS PROTEIN AND PTS TRANSMEMBRANE COMPONENT"/>
    <property type="match status" value="1"/>
</dbReference>
<dbReference type="PANTHER" id="PTHR30009:SF20">
    <property type="entry name" value="PTS SYSTEM GLUCOSE-SPECIFIC EIICB COMPONENT-RELATED"/>
    <property type="match status" value="1"/>
</dbReference>
<dbReference type="Pfam" id="PF00358">
    <property type="entry name" value="PTS_EIIA_1"/>
    <property type="match status" value="1"/>
</dbReference>
<dbReference type="Pfam" id="PF00367">
    <property type="entry name" value="PTS_EIIB"/>
    <property type="match status" value="1"/>
</dbReference>
<dbReference type="Pfam" id="PF02378">
    <property type="entry name" value="PTS_EIIC"/>
    <property type="match status" value="1"/>
</dbReference>
<dbReference type="SUPFAM" id="SSF51261">
    <property type="entry name" value="Duplicated hybrid motif"/>
    <property type="match status" value="1"/>
</dbReference>
<dbReference type="SUPFAM" id="SSF55604">
    <property type="entry name" value="Glucose permease domain IIB"/>
    <property type="match status" value="1"/>
</dbReference>
<dbReference type="PROSITE" id="PS51093">
    <property type="entry name" value="PTS_EIIA_TYPE_1"/>
    <property type="match status" value="1"/>
</dbReference>
<dbReference type="PROSITE" id="PS00371">
    <property type="entry name" value="PTS_EIIA_TYPE_1_HIS"/>
    <property type="match status" value="1"/>
</dbReference>
<dbReference type="PROSITE" id="PS51098">
    <property type="entry name" value="PTS_EIIB_TYPE_1"/>
    <property type="match status" value="1"/>
</dbReference>
<dbReference type="PROSITE" id="PS01035">
    <property type="entry name" value="PTS_EIIB_TYPE_1_CYS"/>
    <property type="match status" value="1"/>
</dbReference>
<dbReference type="PROSITE" id="PS51103">
    <property type="entry name" value="PTS_EIIC_TYPE_1"/>
    <property type="match status" value="1"/>
</dbReference>
<accession>A7X6P1</accession>
<comment type="function">
    <text evidence="1">The phosphoenolpyruvate-dependent sugar phosphotransferase system (sugar PTS), a major carbohydrate active -transport system, catalyzes the phosphorylation of incoming sugar substrates concomitantly with their translocation across the cell membrane. This system is involved in alpha- and beta-glucoside transport (By similarity).</text>
</comment>
<comment type="subcellular location">
    <subcellularLocation>
        <location evidence="4">Cell membrane</location>
        <topology evidence="4">Multi-pass membrane protein</topology>
    </subcellularLocation>
</comment>
<comment type="domain">
    <text>The EIIC domain forms the PTS system translocation channel and contains the specific substrate-binding site.</text>
</comment>
<comment type="domain">
    <text>The EIIB domain is phosphorylated by phospho-EIIA on a cysteinyl or histidyl residue, depending on the transported sugar. Then, it transfers the phosphoryl group to the sugar substrate concomitantly with the sugar uptake processed by the EIIC domain.</text>
</comment>
<comment type="domain">
    <text>The EIIA domain is phosphorylated by phospho-HPr on a histidyl residue. Then, it transfers the phosphoryl group to the EIIB domain.</text>
</comment>
<keyword id="KW-1003">Cell membrane</keyword>
<keyword id="KW-0418">Kinase</keyword>
<keyword id="KW-0472">Membrane</keyword>
<keyword id="KW-0598">Phosphotransferase system</keyword>
<keyword id="KW-0762">Sugar transport</keyword>
<keyword id="KW-0808">Transferase</keyword>
<keyword id="KW-0812">Transmembrane</keyword>
<keyword id="KW-1133">Transmembrane helix</keyword>
<keyword id="KW-0813">Transport</keyword>
<feature type="chain" id="PRO_0000351407" description="PTS system glucoside-specific EIICBA component">
    <location>
        <begin position="1"/>
        <end position="688"/>
    </location>
</feature>
<feature type="transmembrane region" description="Helical" evidence="4">
    <location>
        <begin position="12"/>
        <end position="32"/>
    </location>
</feature>
<feature type="transmembrane region" description="Helical" evidence="4">
    <location>
        <begin position="81"/>
        <end position="101"/>
    </location>
</feature>
<feature type="transmembrane region" description="Helical" evidence="4">
    <location>
        <begin position="137"/>
        <end position="157"/>
    </location>
</feature>
<feature type="transmembrane region" description="Helical" evidence="4">
    <location>
        <begin position="182"/>
        <end position="202"/>
    </location>
</feature>
<feature type="transmembrane region" description="Helical" evidence="4">
    <location>
        <begin position="223"/>
        <end position="243"/>
    </location>
</feature>
<feature type="transmembrane region" description="Helical" evidence="4">
    <location>
        <begin position="284"/>
        <end position="304"/>
    </location>
</feature>
<feature type="transmembrane region" description="Helical" evidence="4">
    <location>
        <begin position="315"/>
        <end position="335"/>
    </location>
</feature>
<feature type="transmembrane region" description="Helical" evidence="4">
    <location>
        <begin position="340"/>
        <end position="360"/>
    </location>
</feature>
<feature type="transmembrane region" description="Helical" evidence="4">
    <location>
        <begin position="364"/>
        <end position="384"/>
    </location>
</feature>
<feature type="transmembrane region" description="Helical" evidence="4">
    <location>
        <begin position="395"/>
        <end position="415"/>
    </location>
</feature>
<feature type="domain" description="PTS EIIC type-1" evidence="4">
    <location>
        <begin position="3"/>
        <end position="427"/>
    </location>
</feature>
<feature type="domain" description="PTS EIIB type-1" evidence="3">
    <location>
        <begin position="438"/>
        <end position="519"/>
    </location>
</feature>
<feature type="domain" description="PTS EIIA type-1" evidence="2">
    <location>
        <begin position="560"/>
        <end position="664"/>
    </location>
</feature>
<feature type="active site" description="Phosphocysteine intermediate; for EIIB activity" evidence="3">
    <location>
        <position position="460"/>
    </location>
</feature>
<feature type="active site" description="Tele-phosphohistidine intermediate; for EIIA activity" evidence="2">
    <location>
        <position position="612"/>
    </location>
</feature>